<evidence type="ECO:0000255" key="1"/>
<evidence type="ECO:0000305" key="2"/>
<name>PEPE_MYCTU</name>
<gene>
    <name type="primary">pepE</name>
    <name type="ordered locus">Rv2089c</name>
    <name type="ORF">MTCY49.29c</name>
</gene>
<sequence>MGSRRFDAEVYARRLALAAAATADAGLAGLVITPGYDLCYLIGSRAETFERLTALVLPAAGAPAVVLPRLELAALKQSAAAELGLRVCDWVDGDDPYGLVSAVLGGAPVATAVTDSMPALHMLPLADALGVLPVLATDVLRRLRMVKEETEIDALRKAGAAIDRVHARVPEFLVPGRTEADVAADIAEAIVAEGHSEVAFVIVGSGPHGADPHHGYSDRELREGDIVVVDIGGTYGPGYHSDSTRTYSIGEPDSDVAQSYSMLQRAQRAAFEAIRPGVTAEQVDAAARDVLAEAGLAEYFVHRTGHGIGLCVHEEPYIVAGNDLVLVPGMAFSIEPGIYFPGRWGARIEDIVIVTEDGAVSVNNCPHELIVVPVS</sequence>
<accession>P9WHS7</accession>
<accession>L0TBH5</accession>
<accession>P65810</accession>
<accession>Q10698</accession>
<dbReference type="EC" id="3.4.13.-"/>
<dbReference type="EMBL" id="AL123456">
    <property type="protein sequence ID" value="CCP44864.1"/>
    <property type="molecule type" value="Genomic_DNA"/>
</dbReference>
<dbReference type="PIR" id="D70767">
    <property type="entry name" value="D70767"/>
</dbReference>
<dbReference type="RefSeq" id="NP_216605.1">
    <property type="nucleotide sequence ID" value="NC_000962.3"/>
</dbReference>
<dbReference type="RefSeq" id="WP_003410743.1">
    <property type="nucleotide sequence ID" value="NZ_NVQJ01000061.1"/>
</dbReference>
<dbReference type="SMR" id="P9WHS7"/>
<dbReference type="FunCoup" id="P9WHS7">
    <property type="interactions" value="313"/>
</dbReference>
<dbReference type="STRING" id="83332.Rv2089c"/>
<dbReference type="PaxDb" id="83332-Rv2089c"/>
<dbReference type="DNASU" id="887719"/>
<dbReference type="GeneID" id="887719"/>
<dbReference type="KEGG" id="mtu:Rv2089c"/>
<dbReference type="KEGG" id="mtv:RVBD_2089c"/>
<dbReference type="TubercuList" id="Rv2089c"/>
<dbReference type="eggNOG" id="COG0006">
    <property type="taxonomic scope" value="Bacteria"/>
</dbReference>
<dbReference type="InParanoid" id="P9WHS7"/>
<dbReference type="OrthoDB" id="9806388at2"/>
<dbReference type="PhylomeDB" id="P9WHS7"/>
<dbReference type="BRENDA" id="3.4.13.9">
    <property type="organism ID" value="3445"/>
</dbReference>
<dbReference type="Proteomes" id="UP000001584">
    <property type="component" value="Chromosome"/>
</dbReference>
<dbReference type="GO" id="GO:0005886">
    <property type="term" value="C:plasma membrane"/>
    <property type="evidence" value="ECO:0007669"/>
    <property type="project" value="UniProtKB-SubCell"/>
</dbReference>
<dbReference type="GO" id="GO:0046872">
    <property type="term" value="F:metal ion binding"/>
    <property type="evidence" value="ECO:0007669"/>
    <property type="project" value="UniProtKB-KW"/>
</dbReference>
<dbReference type="GO" id="GO:0070006">
    <property type="term" value="F:metalloaminopeptidase activity"/>
    <property type="evidence" value="ECO:0000318"/>
    <property type="project" value="GO_Central"/>
</dbReference>
<dbReference type="GO" id="GO:0006508">
    <property type="term" value="P:proteolysis"/>
    <property type="evidence" value="ECO:0000318"/>
    <property type="project" value="GO_Central"/>
</dbReference>
<dbReference type="CDD" id="cd01092">
    <property type="entry name" value="APP-like"/>
    <property type="match status" value="1"/>
</dbReference>
<dbReference type="Gene3D" id="3.90.230.10">
    <property type="entry name" value="Creatinase/methionine aminopeptidase superfamily"/>
    <property type="match status" value="1"/>
</dbReference>
<dbReference type="Gene3D" id="3.40.350.10">
    <property type="entry name" value="Creatinase/prolidase N-terminal domain"/>
    <property type="match status" value="1"/>
</dbReference>
<dbReference type="InterPro" id="IPR029149">
    <property type="entry name" value="Creatin/AminoP/Spt16_N"/>
</dbReference>
<dbReference type="InterPro" id="IPR036005">
    <property type="entry name" value="Creatinase/aminopeptidase-like"/>
</dbReference>
<dbReference type="InterPro" id="IPR000587">
    <property type="entry name" value="Creatinase_N"/>
</dbReference>
<dbReference type="InterPro" id="IPR000994">
    <property type="entry name" value="Pept_M24"/>
</dbReference>
<dbReference type="InterPro" id="IPR050659">
    <property type="entry name" value="Peptidase_M24B"/>
</dbReference>
<dbReference type="InterPro" id="IPR001131">
    <property type="entry name" value="Peptidase_M24B_aminopep-P_CS"/>
</dbReference>
<dbReference type="PANTHER" id="PTHR46112">
    <property type="entry name" value="AMINOPEPTIDASE"/>
    <property type="match status" value="1"/>
</dbReference>
<dbReference type="PANTHER" id="PTHR46112:SF3">
    <property type="entry name" value="AMINOPEPTIDASE YPDF"/>
    <property type="match status" value="1"/>
</dbReference>
<dbReference type="Pfam" id="PF01321">
    <property type="entry name" value="Creatinase_N"/>
    <property type="match status" value="1"/>
</dbReference>
<dbReference type="Pfam" id="PF00557">
    <property type="entry name" value="Peptidase_M24"/>
    <property type="match status" value="1"/>
</dbReference>
<dbReference type="SUPFAM" id="SSF55920">
    <property type="entry name" value="Creatinase/aminopeptidase"/>
    <property type="match status" value="1"/>
</dbReference>
<dbReference type="SUPFAM" id="SSF53092">
    <property type="entry name" value="Creatinase/prolidase N-terminal domain"/>
    <property type="match status" value="1"/>
</dbReference>
<dbReference type="PROSITE" id="PS00491">
    <property type="entry name" value="PROLINE_PEPTIDASE"/>
    <property type="match status" value="1"/>
</dbReference>
<keyword id="KW-1003">Cell membrane</keyword>
<keyword id="KW-0378">Hydrolase</keyword>
<keyword id="KW-0464">Manganese</keyword>
<keyword id="KW-0472">Membrane</keyword>
<keyword id="KW-0479">Metal-binding</keyword>
<keyword id="KW-1185">Reference proteome</keyword>
<keyword id="KW-0812">Transmembrane</keyword>
<keyword id="KW-1133">Transmembrane helix</keyword>
<feature type="chain" id="PRO_0000185102" description="Probable dipeptidase PepE">
    <location>
        <begin position="1"/>
        <end position="375"/>
    </location>
</feature>
<feature type="transmembrane region" description="Helical" evidence="1">
    <location>
        <begin position="15"/>
        <end position="35"/>
    </location>
</feature>
<feature type="transmembrane region" description="Helical" evidence="1">
    <location>
        <begin position="55"/>
        <end position="75"/>
    </location>
</feature>
<feature type="binding site" evidence="1">
    <location>
        <position position="230"/>
    </location>
    <ligand>
        <name>Mn(2+)</name>
        <dbReference type="ChEBI" id="CHEBI:29035"/>
        <label>2</label>
    </ligand>
</feature>
<feature type="binding site" evidence="1">
    <location>
        <position position="242"/>
    </location>
    <ligand>
        <name>Mn(2+)</name>
        <dbReference type="ChEBI" id="CHEBI:29035"/>
        <label>1</label>
    </ligand>
</feature>
<feature type="binding site" evidence="1">
    <location>
        <position position="242"/>
    </location>
    <ligand>
        <name>Mn(2+)</name>
        <dbReference type="ChEBI" id="CHEBI:29035"/>
        <label>2</label>
    </ligand>
</feature>
<feature type="binding site" evidence="1">
    <location>
        <position position="306"/>
    </location>
    <ligand>
        <name>Mn(2+)</name>
        <dbReference type="ChEBI" id="CHEBI:29035"/>
        <label>1</label>
    </ligand>
</feature>
<feature type="binding site" evidence="1">
    <location>
        <position position="335"/>
    </location>
    <ligand>
        <name>Mn(2+)</name>
        <dbReference type="ChEBI" id="CHEBI:29035"/>
        <label>1</label>
    </ligand>
</feature>
<feature type="binding site" evidence="1">
    <location>
        <position position="349"/>
    </location>
    <ligand>
        <name>Mn(2+)</name>
        <dbReference type="ChEBI" id="CHEBI:29035"/>
        <label>1</label>
    </ligand>
</feature>
<feature type="binding site" evidence="1">
    <location>
        <position position="349"/>
    </location>
    <ligand>
        <name>Mn(2+)</name>
        <dbReference type="ChEBI" id="CHEBI:29035"/>
        <label>2</label>
    </ligand>
</feature>
<organism>
    <name type="scientific">Mycobacterium tuberculosis (strain ATCC 25618 / H37Rv)</name>
    <dbReference type="NCBI Taxonomy" id="83332"/>
    <lineage>
        <taxon>Bacteria</taxon>
        <taxon>Bacillati</taxon>
        <taxon>Actinomycetota</taxon>
        <taxon>Actinomycetes</taxon>
        <taxon>Mycobacteriales</taxon>
        <taxon>Mycobacteriaceae</taxon>
        <taxon>Mycobacterium</taxon>
        <taxon>Mycobacterium tuberculosis complex</taxon>
    </lineage>
</organism>
<protein>
    <recommendedName>
        <fullName>Probable dipeptidase PepE</fullName>
        <ecNumber>3.4.13.-</ecNumber>
    </recommendedName>
</protein>
<reference key="1">
    <citation type="journal article" date="1998" name="Nature">
        <title>Deciphering the biology of Mycobacterium tuberculosis from the complete genome sequence.</title>
        <authorList>
            <person name="Cole S.T."/>
            <person name="Brosch R."/>
            <person name="Parkhill J."/>
            <person name="Garnier T."/>
            <person name="Churcher C.M."/>
            <person name="Harris D.E."/>
            <person name="Gordon S.V."/>
            <person name="Eiglmeier K."/>
            <person name="Gas S."/>
            <person name="Barry C.E. III"/>
            <person name="Tekaia F."/>
            <person name="Badcock K."/>
            <person name="Basham D."/>
            <person name="Brown D."/>
            <person name="Chillingworth T."/>
            <person name="Connor R."/>
            <person name="Davies R.M."/>
            <person name="Devlin K."/>
            <person name="Feltwell T."/>
            <person name="Gentles S."/>
            <person name="Hamlin N."/>
            <person name="Holroyd S."/>
            <person name="Hornsby T."/>
            <person name="Jagels K."/>
            <person name="Krogh A."/>
            <person name="McLean J."/>
            <person name="Moule S."/>
            <person name="Murphy L.D."/>
            <person name="Oliver S."/>
            <person name="Osborne J."/>
            <person name="Quail M.A."/>
            <person name="Rajandream M.A."/>
            <person name="Rogers J."/>
            <person name="Rutter S."/>
            <person name="Seeger K."/>
            <person name="Skelton S."/>
            <person name="Squares S."/>
            <person name="Squares R."/>
            <person name="Sulston J.E."/>
            <person name="Taylor K."/>
            <person name="Whitehead S."/>
            <person name="Barrell B.G."/>
        </authorList>
    </citation>
    <scope>NUCLEOTIDE SEQUENCE [LARGE SCALE GENOMIC DNA]</scope>
    <source>
        <strain>ATCC 25618 / H37Rv</strain>
    </source>
</reference>
<reference key="2">
    <citation type="journal article" date="2011" name="Mol. Cell. Proteomics">
        <title>Proteogenomic analysis of Mycobacterium tuberculosis by high resolution mass spectrometry.</title>
        <authorList>
            <person name="Kelkar D.S."/>
            <person name="Kumar D."/>
            <person name="Kumar P."/>
            <person name="Balakrishnan L."/>
            <person name="Muthusamy B."/>
            <person name="Yadav A.K."/>
            <person name="Shrivastava P."/>
            <person name="Marimuthu A."/>
            <person name="Anand S."/>
            <person name="Sundaram H."/>
            <person name="Kingsbury R."/>
            <person name="Harsha H.C."/>
            <person name="Nair B."/>
            <person name="Prasad T.S."/>
            <person name="Chauhan D.S."/>
            <person name="Katoch K."/>
            <person name="Katoch V.M."/>
            <person name="Kumar P."/>
            <person name="Chaerkady R."/>
            <person name="Ramachandran S."/>
            <person name="Dash D."/>
            <person name="Pandey A."/>
        </authorList>
    </citation>
    <scope>IDENTIFICATION BY MASS SPECTROMETRY [LARGE SCALE ANALYSIS]</scope>
    <source>
        <strain>ATCC 25618 / H37Rv</strain>
    </source>
</reference>
<proteinExistence type="evidence at protein level"/>
<comment type="cofactor">
    <cofactor evidence="2">
        <name>Mn(2+)</name>
        <dbReference type="ChEBI" id="CHEBI:29035"/>
    </cofactor>
    <text evidence="2">Binds 2 manganese ions per subunit.</text>
</comment>
<comment type="subcellular location">
    <subcellularLocation>
        <location evidence="2">Cell membrane</location>
        <topology evidence="2">Multi-pass membrane protein</topology>
    </subcellularLocation>
</comment>
<comment type="similarity">
    <text evidence="2">Belongs to the peptidase M24B family.</text>
</comment>